<accession>Q56XP4</accession>
<accession>Q9CAW6</accession>
<evidence type="ECO:0000255" key="1"/>
<evidence type="ECO:0000269" key="2">
    <source>
    </source>
</evidence>
<evidence type="ECO:0000303" key="3">
    <source ref="4"/>
</evidence>
<evidence type="ECO:0000305" key="4"/>
<organism>
    <name type="scientific">Arabidopsis thaliana</name>
    <name type="common">Mouse-ear cress</name>
    <dbReference type="NCBI Taxonomy" id="3702"/>
    <lineage>
        <taxon>Eukaryota</taxon>
        <taxon>Viridiplantae</taxon>
        <taxon>Streptophyta</taxon>
        <taxon>Embryophyta</taxon>
        <taxon>Tracheophyta</taxon>
        <taxon>Spermatophyta</taxon>
        <taxon>Magnoliopsida</taxon>
        <taxon>eudicotyledons</taxon>
        <taxon>Gunneridae</taxon>
        <taxon>Pentapetalae</taxon>
        <taxon>rosids</taxon>
        <taxon>malvids</taxon>
        <taxon>Brassicales</taxon>
        <taxon>Brassicaceae</taxon>
        <taxon>Camelineae</taxon>
        <taxon>Arabidopsis</taxon>
    </lineage>
</organism>
<keyword id="KW-0025">Alternative splicing</keyword>
<keyword id="KW-0050">Antiport</keyword>
<keyword id="KW-0325">Glycoprotein</keyword>
<keyword id="KW-0406">Ion transport</keyword>
<keyword id="KW-0472">Membrane</keyword>
<keyword id="KW-0630">Potassium</keyword>
<keyword id="KW-0633">Potassium transport</keyword>
<keyword id="KW-1185">Reference proteome</keyword>
<keyword id="KW-0915">Sodium</keyword>
<keyword id="KW-0739">Sodium transport</keyword>
<keyword id="KW-0812">Transmembrane</keyword>
<keyword id="KW-1133">Transmembrane helix</keyword>
<keyword id="KW-0813">Transport</keyword>
<keyword id="KW-0926">Vacuole</keyword>
<feature type="chain" id="PRO_0000052373" description="Sodium/hydrogen exchanger 2">
    <location>
        <begin position="1"/>
        <end position="546"/>
    </location>
</feature>
<feature type="topological domain" description="Cytoplasmic" evidence="1">
    <location>
        <begin position="1"/>
        <end position="21"/>
    </location>
</feature>
<feature type="transmembrane region" description="Helical" evidence="1">
    <location>
        <begin position="22"/>
        <end position="42"/>
    </location>
</feature>
<feature type="topological domain" description="Vacuolar" evidence="1">
    <location>
        <begin position="43"/>
        <end position="47"/>
    </location>
</feature>
<feature type="transmembrane region" description="Helical" evidence="1">
    <location>
        <begin position="48"/>
        <end position="68"/>
    </location>
</feature>
<feature type="topological domain" description="Cytoplasmic" evidence="1">
    <location>
        <begin position="69"/>
        <end position="75"/>
    </location>
</feature>
<feature type="intramembrane region" description="Helical" evidence="1">
    <location>
        <begin position="76"/>
        <end position="96"/>
    </location>
</feature>
<feature type="topological domain" description="Cytoplasmic" evidence="1">
    <location>
        <begin position="97"/>
        <end position="111"/>
    </location>
</feature>
<feature type="transmembrane region" description="Helical" evidence="1">
    <location>
        <begin position="112"/>
        <end position="132"/>
    </location>
</feature>
<feature type="topological domain" description="Vacuolar" evidence="1">
    <location>
        <begin position="133"/>
        <end position="148"/>
    </location>
</feature>
<feature type="intramembrane region" description="Helical" evidence="1">
    <location>
        <begin position="149"/>
        <end position="168"/>
    </location>
</feature>
<feature type="intramembrane region" description="Helical" evidence="1">
    <location>
        <begin position="174"/>
        <end position="194"/>
    </location>
</feature>
<feature type="topological domain" description="Vacuolar" evidence="1">
    <location>
        <begin position="195"/>
        <end position="218"/>
    </location>
</feature>
<feature type="transmembrane region" description="Helical" evidence="1">
    <location>
        <begin position="219"/>
        <end position="239"/>
    </location>
</feature>
<feature type="topological domain" description="Cytoplasmic" evidence="1">
    <location>
        <begin position="240"/>
        <end position="264"/>
    </location>
</feature>
<feature type="transmembrane region" description="Helical" evidence="1">
    <location>
        <begin position="265"/>
        <end position="285"/>
    </location>
</feature>
<feature type="topological domain" description="Vacuolar" evidence="1">
    <location>
        <begin position="286"/>
        <end position="304"/>
    </location>
</feature>
<feature type="transmembrane region" description="Helical" evidence="1">
    <location>
        <begin position="305"/>
        <end position="325"/>
    </location>
</feature>
<feature type="topological domain" description="Cytoplasmic" evidence="1">
    <location>
        <begin position="326"/>
        <end position="344"/>
    </location>
</feature>
<feature type="transmembrane region" description="Helical" evidence="1">
    <location>
        <begin position="345"/>
        <end position="365"/>
    </location>
</feature>
<feature type="topological domain" description="Vacuolar" evidence="1">
    <location>
        <begin position="366"/>
        <end position="381"/>
    </location>
</feature>
<feature type="transmembrane region" description="Helical" evidence="1">
    <location>
        <begin position="382"/>
        <end position="402"/>
    </location>
</feature>
<feature type="topological domain" description="Cytoplasmic" evidence="1">
    <location>
        <begin position="403"/>
        <end position="415"/>
    </location>
</feature>
<feature type="transmembrane region" description="Helical" evidence="1">
    <location>
        <begin position="416"/>
        <end position="436"/>
    </location>
</feature>
<feature type="topological domain" description="Vacuolar" evidence="1">
    <location>
        <begin position="437"/>
        <end position="546"/>
    </location>
</feature>
<feature type="glycosylation site" description="N-linked (GlcNAc...) asparagine" evidence="1">
    <location>
        <position position="292"/>
    </location>
</feature>
<feature type="splice variant" id="VSP_016701" description="In isoform 2." evidence="3">
    <location>
        <begin position="1"/>
        <end position="125"/>
    </location>
</feature>
<feature type="splice variant" id="VSP_016702" description="In isoform 2." evidence="3">
    <original>IISL</original>
    <variation>MFET</variation>
    <location>
        <begin position="126"/>
        <end position="129"/>
    </location>
</feature>
<comment type="function">
    <text evidence="2">Acts in low affinity electroneutral exchange of protons for cations such as Na(+) or K(+) across membranes. May also exchange Li(+) and Cs(+) with a lower affinity. Involved in vacuolar ion compartmentalization necessary for cell volume regulation and cytoplasmic Na(+) detoxification.</text>
</comment>
<comment type="catalytic activity">
    <reaction evidence="2">
        <text>Na(+)(in) + H(+)(out) = Na(+)(out) + H(+)(in)</text>
        <dbReference type="Rhea" id="RHEA:29419"/>
        <dbReference type="ChEBI" id="CHEBI:15378"/>
        <dbReference type="ChEBI" id="CHEBI:29101"/>
    </reaction>
</comment>
<comment type="catalytic activity">
    <reaction evidence="2">
        <text>K(+)(in) + H(+)(out) = K(+)(out) + H(+)(in)</text>
        <dbReference type="Rhea" id="RHEA:29467"/>
        <dbReference type="ChEBI" id="CHEBI:15378"/>
        <dbReference type="ChEBI" id="CHEBI:29103"/>
    </reaction>
</comment>
<comment type="subcellular location">
    <subcellularLocation>
        <location evidence="2">Vacuole membrane</location>
        <topology evidence="2">Multi-pass membrane protein</topology>
    </subcellularLocation>
    <text>Tonoplast.</text>
</comment>
<comment type="alternative products">
    <event type="alternative splicing"/>
    <isoform>
        <id>Q56XP4-1</id>
        <name>1</name>
        <sequence type="displayed"/>
    </isoform>
    <isoform>
        <id>Q56XP4-2</id>
        <name>2</name>
        <sequence type="described" ref="VSP_016701 VSP_016702"/>
    </isoform>
</comment>
<comment type="tissue specificity">
    <text evidence="2">Expressed in roots and shoots.</text>
</comment>
<comment type="induction">
    <text evidence="2">Induced by abscisic acid (ABA), and by NaCl and sorbitol in a ABA-dependent manner.</text>
</comment>
<comment type="similarity">
    <text evidence="4">Belongs to the monovalent cation:proton antiporter 1 (CPA1) transporter (TC 2.A.36) family.</text>
</comment>
<gene>
    <name type="primary">NHX2</name>
    <name type="ordered locus">At3g05030</name>
    <name type="ORF">T9J14.2</name>
</gene>
<protein>
    <recommendedName>
        <fullName>Sodium/hydrogen exchanger 2</fullName>
    </recommendedName>
    <alternativeName>
        <fullName>Na(+)/H(+) exchanger 2</fullName>
        <shortName>NHE-2</shortName>
    </alternativeName>
</protein>
<reference key="1">
    <citation type="journal article" date="2002" name="Plant J.">
        <title>Differential expression and function of Arabidopsis thaliana NHX Na(+)/H(+) antiporters in the salt stress response.</title>
        <authorList>
            <person name="Yokoi S."/>
            <person name="Quintero F.J."/>
            <person name="Cubero B."/>
            <person name="Ruiz M.T."/>
            <person name="Bressan R.A."/>
            <person name="Hasegawa P.M."/>
            <person name="Pardo J.M."/>
        </authorList>
    </citation>
    <scope>NUCLEOTIDE SEQUENCE [MRNA] (ISOFORM 1)</scope>
    <scope>FUNCTION</scope>
    <scope>TISSUE SPECIFICITY</scope>
    <scope>SUBCELLULAR LOCATION</scope>
    <scope>INDUCTION</scope>
    <source>
        <strain>cv. Landsberg erecta</strain>
    </source>
</reference>
<reference key="2">
    <citation type="journal article" date="2000" name="Nature">
        <title>Sequence and analysis of chromosome 3 of the plant Arabidopsis thaliana.</title>
        <authorList>
            <person name="Salanoubat M."/>
            <person name="Lemcke K."/>
            <person name="Rieger M."/>
            <person name="Ansorge W."/>
            <person name="Unseld M."/>
            <person name="Fartmann B."/>
            <person name="Valle G."/>
            <person name="Bloecker H."/>
            <person name="Perez-Alonso M."/>
            <person name="Obermaier B."/>
            <person name="Delseny M."/>
            <person name="Boutry M."/>
            <person name="Grivell L.A."/>
            <person name="Mache R."/>
            <person name="Puigdomenech P."/>
            <person name="De Simone V."/>
            <person name="Choisne N."/>
            <person name="Artiguenave F."/>
            <person name="Robert C."/>
            <person name="Brottier P."/>
            <person name="Wincker P."/>
            <person name="Cattolico L."/>
            <person name="Weissenbach J."/>
            <person name="Saurin W."/>
            <person name="Quetier F."/>
            <person name="Schaefer M."/>
            <person name="Mueller-Auer S."/>
            <person name="Gabel C."/>
            <person name="Fuchs M."/>
            <person name="Benes V."/>
            <person name="Wurmbach E."/>
            <person name="Drzonek H."/>
            <person name="Erfle H."/>
            <person name="Jordan N."/>
            <person name="Bangert S."/>
            <person name="Wiedelmann R."/>
            <person name="Kranz H."/>
            <person name="Voss H."/>
            <person name="Holland R."/>
            <person name="Brandt P."/>
            <person name="Nyakatura G."/>
            <person name="Vezzi A."/>
            <person name="D'Angelo M."/>
            <person name="Pallavicini A."/>
            <person name="Toppo S."/>
            <person name="Simionati B."/>
            <person name="Conrad A."/>
            <person name="Hornischer K."/>
            <person name="Kauer G."/>
            <person name="Loehnert T.-H."/>
            <person name="Nordsiek G."/>
            <person name="Reichelt J."/>
            <person name="Scharfe M."/>
            <person name="Schoen O."/>
            <person name="Bargues M."/>
            <person name="Terol J."/>
            <person name="Climent J."/>
            <person name="Navarro P."/>
            <person name="Collado C."/>
            <person name="Perez-Perez A."/>
            <person name="Ottenwaelder B."/>
            <person name="Duchemin D."/>
            <person name="Cooke R."/>
            <person name="Laudie M."/>
            <person name="Berger-Llauro C."/>
            <person name="Purnelle B."/>
            <person name="Masuy D."/>
            <person name="de Haan M."/>
            <person name="Maarse A.C."/>
            <person name="Alcaraz J.-P."/>
            <person name="Cottet A."/>
            <person name="Casacuberta E."/>
            <person name="Monfort A."/>
            <person name="Argiriou A."/>
            <person name="Flores M."/>
            <person name="Liguori R."/>
            <person name="Vitale D."/>
            <person name="Mannhaupt G."/>
            <person name="Haase D."/>
            <person name="Schoof H."/>
            <person name="Rudd S."/>
            <person name="Zaccaria P."/>
            <person name="Mewes H.-W."/>
            <person name="Mayer K.F.X."/>
            <person name="Kaul S."/>
            <person name="Town C.D."/>
            <person name="Koo H.L."/>
            <person name="Tallon L.J."/>
            <person name="Jenkins J."/>
            <person name="Rooney T."/>
            <person name="Rizzo M."/>
            <person name="Walts A."/>
            <person name="Utterback T."/>
            <person name="Fujii C.Y."/>
            <person name="Shea T.P."/>
            <person name="Creasy T.H."/>
            <person name="Haas B."/>
            <person name="Maiti R."/>
            <person name="Wu D."/>
            <person name="Peterson J."/>
            <person name="Van Aken S."/>
            <person name="Pai G."/>
            <person name="Militscher J."/>
            <person name="Sellers P."/>
            <person name="Gill J.E."/>
            <person name="Feldblyum T.V."/>
            <person name="Preuss D."/>
            <person name="Lin X."/>
            <person name="Nierman W.C."/>
            <person name="Salzberg S.L."/>
            <person name="White O."/>
            <person name="Venter J.C."/>
            <person name="Fraser C.M."/>
            <person name="Kaneko T."/>
            <person name="Nakamura Y."/>
            <person name="Sato S."/>
            <person name="Kato T."/>
            <person name="Asamizu E."/>
            <person name="Sasamoto S."/>
            <person name="Kimura T."/>
            <person name="Idesawa K."/>
            <person name="Kawashima K."/>
            <person name="Kishida Y."/>
            <person name="Kiyokawa C."/>
            <person name="Kohara M."/>
            <person name="Matsumoto M."/>
            <person name="Matsuno A."/>
            <person name="Muraki A."/>
            <person name="Nakayama S."/>
            <person name="Nakazaki N."/>
            <person name="Shinpo S."/>
            <person name="Takeuchi C."/>
            <person name="Wada T."/>
            <person name="Watanabe A."/>
            <person name="Yamada M."/>
            <person name="Yasuda M."/>
            <person name="Tabata S."/>
        </authorList>
    </citation>
    <scope>NUCLEOTIDE SEQUENCE [LARGE SCALE GENOMIC DNA]</scope>
    <source>
        <strain>cv. Columbia</strain>
    </source>
</reference>
<reference key="3">
    <citation type="journal article" date="2017" name="Plant J.">
        <title>Araport11: a complete reannotation of the Arabidopsis thaliana reference genome.</title>
        <authorList>
            <person name="Cheng C.Y."/>
            <person name="Krishnakumar V."/>
            <person name="Chan A.P."/>
            <person name="Thibaud-Nissen F."/>
            <person name="Schobel S."/>
            <person name="Town C.D."/>
        </authorList>
    </citation>
    <scope>GENOME REANNOTATION</scope>
    <source>
        <strain>cv. Columbia</strain>
    </source>
</reference>
<reference key="4">
    <citation type="submission" date="2005-03" db="EMBL/GenBank/DDBJ databases">
        <title>Large-scale analysis of RIKEN Arabidopsis full-length (RAFL) cDNAs.</title>
        <authorList>
            <person name="Totoki Y."/>
            <person name="Seki M."/>
            <person name="Ishida J."/>
            <person name="Nakajima M."/>
            <person name="Enju A."/>
            <person name="Kamiya A."/>
            <person name="Narusaka M."/>
            <person name="Shin-i T."/>
            <person name="Nakagawa M."/>
            <person name="Sakamoto N."/>
            <person name="Oishi K."/>
            <person name="Kohara Y."/>
            <person name="Kobayashi M."/>
            <person name="Toyoda A."/>
            <person name="Sakaki Y."/>
            <person name="Sakurai T."/>
            <person name="Iida K."/>
            <person name="Akiyama K."/>
            <person name="Satou M."/>
            <person name="Toyoda T."/>
            <person name="Konagaya A."/>
            <person name="Carninci P."/>
            <person name="Kawai J."/>
            <person name="Hayashizaki Y."/>
            <person name="Shinozaki K."/>
        </authorList>
    </citation>
    <scope>NUCLEOTIDE SEQUENCE [LARGE SCALE MRNA] (ISOFORM 2)</scope>
    <source>
        <strain>cv. Columbia</strain>
    </source>
</reference>
<name>NHX2_ARATH</name>
<sequence>MTMFASLTSKMLSVSTSDHASVVSLNLFVALLCACIVIGHLLEENRWMNESITALLIGLGTGVVILLISRGKNSHLLVFSEDLFFIYLLPPIIFNAGFQVKKKQFFRNFVTIMAFGAIGTVVSCTIISLGAIQFFKKLDIGTFDLGDFLAIGAIFAATDSVCTLQVLNQDETPLLYSLVFGEGVVNDATSVVLFNAIQSFDLTHLNHEAAFQFLGNFFYLFLLSTGLGVATGLISAYVIKKLYFGRHSTDREVALMMLMAYLSYMLAELFALSGILTVFFCGIVMSHYTWHNVTESSRITTKHAFATLSFLAETFIFLYVGMDALDIEKWRFVSDSPGTSVAVSSILMGLVMLGRAAFVFPLSFLSNLAKKHQSEKISIKQQVVIWWAGLMRGAVSMALAYNKFTRSGHTELRGNAIMITSTITVCLFSTMVFGMLTKPLIRYLMPHQKATTSTTSMLSDDSTPKSIHIPLLDGEQLDSFELPGSHQDVPRPNSLRGFLMRPTRTVHYYWRQFDDAFMRPVFGGRGFVPFVPGSPTERSSHDLSKP</sequence>
<dbReference type="EMBL" id="AF490586">
    <property type="protein sequence ID" value="AAM08403.1"/>
    <property type="molecule type" value="mRNA"/>
</dbReference>
<dbReference type="EMBL" id="AC009465">
    <property type="protein sequence ID" value="AAG51408.1"/>
    <property type="molecule type" value="Genomic_DNA"/>
</dbReference>
<dbReference type="EMBL" id="CP002686">
    <property type="protein sequence ID" value="AEE74177.1"/>
    <property type="molecule type" value="Genomic_DNA"/>
</dbReference>
<dbReference type="EMBL" id="CP002686">
    <property type="protein sequence ID" value="AEE74178.2"/>
    <property type="molecule type" value="Genomic_DNA"/>
</dbReference>
<dbReference type="EMBL" id="CP002686">
    <property type="protein sequence ID" value="ANM64164.1"/>
    <property type="molecule type" value="Genomic_DNA"/>
</dbReference>
<dbReference type="EMBL" id="AK221629">
    <property type="protein sequence ID" value="BAD95253.1"/>
    <property type="molecule type" value="mRNA"/>
</dbReference>
<dbReference type="RefSeq" id="NP_001319475.1">
    <molecule id="Q56XP4-1"/>
    <property type="nucleotide sequence ID" value="NM_001337553.1"/>
</dbReference>
<dbReference type="RefSeq" id="NP_001326210.1">
    <molecule id="Q56XP4-1"/>
    <property type="nucleotide sequence ID" value="NM_001337555.1"/>
</dbReference>
<dbReference type="RefSeq" id="NP_187154.1">
    <molecule id="Q56XP4-1"/>
    <property type="nucleotide sequence ID" value="NM_111375.4"/>
</dbReference>
<dbReference type="SMR" id="Q56XP4"/>
<dbReference type="FunCoup" id="Q56XP4">
    <property type="interactions" value="9"/>
</dbReference>
<dbReference type="STRING" id="3702.Q56XP4"/>
<dbReference type="TCDB" id="2.A.36.5.9">
    <property type="family name" value="the monovalent cation:proton antiporter-1 (cpa1) family"/>
</dbReference>
<dbReference type="GlyCosmos" id="Q56XP4">
    <property type="glycosylation" value="1 site, No reported glycans"/>
</dbReference>
<dbReference type="GlyGen" id="Q56XP4">
    <property type="glycosylation" value="1 site"/>
</dbReference>
<dbReference type="iPTMnet" id="Q56XP4"/>
<dbReference type="PaxDb" id="3702-AT3G05030.1"/>
<dbReference type="ProteomicsDB" id="250511">
    <molecule id="Q56XP4-1"/>
</dbReference>
<dbReference type="EnsemblPlants" id="AT3G05030.1">
    <molecule id="Q56XP4-1"/>
    <property type="protein sequence ID" value="AT3G05030.1"/>
    <property type="gene ID" value="AT3G05030"/>
</dbReference>
<dbReference type="EnsemblPlants" id="AT3G05030.2">
    <molecule id="Q56XP4-1"/>
    <property type="protein sequence ID" value="AT3G05030.2"/>
    <property type="gene ID" value="AT3G05030"/>
</dbReference>
<dbReference type="EnsemblPlants" id="AT3G05030.4">
    <molecule id="Q56XP4-1"/>
    <property type="protein sequence ID" value="AT3G05030.4"/>
    <property type="gene ID" value="AT3G05030"/>
</dbReference>
<dbReference type="GeneID" id="819665"/>
<dbReference type="Gramene" id="AT3G05030.1">
    <molecule id="Q56XP4-1"/>
    <property type="protein sequence ID" value="AT3G05030.1"/>
    <property type="gene ID" value="AT3G05030"/>
</dbReference>
<dbReference type="Gramene" id="AT3G05030.2">
    <molecule id="Q56XP4-1"/>
    <property type="protein sequence ID" value="AT3G05030.2"/>
    <property type="gene ID" value="AT3G05030"/>
</dbReference>
<dbReference type="Gramene" id="AT3G05030.4">
    <molecule id="Q56XP4-1"/>
    <property type="protein sequence ID" value="AT3G05030.4"/>
    <property type="gene ID" value="AT3G05030"/>
</dbReference>
<dbReference type="KEGG" id="ath:AT3G05030"/>
<dbReference type="Araport" id="AT3G05030"/>
<dbReference type="TAIR" id="AT3G05030">
    <property type="gene designation" value="NHX2"/>
</dbReference>
<dbReference type="eggNOG" id="KOG1965">
    <property type="taxonomic scope" value="Eukaryota"/>
</dbReference>
<dbReference type="HOGENOM" id="CLU_005912_11_2_1"/>
<dbReference type="InParanoid" id="Q56XP4"/>
<dbReference type="OMA" id="HWMIPTM"/>
<dbReference type="OrthoDB" id="196264at2759"/>
<dbReference type="PhylomeDB" id="Q56XP4"/>
<dbReference type="PRO" id="PR:Q56XP4"/>
<dbReference type="Proteomes" id="UP000006548">
    <property type="component" value="Chromosome 3"/>
</dbReference>
<dbReference type="ExpressionAtlas" id="Q56XP4">
    <property type="expression patterns" value="baseline and differential"/>
</dbReference>
<dbReference type="GO" id="GO:0005829">
    <property type="term" value="C:cytosol"/>
    <property type="evidence" value="ECO:0007005"/>
    <property type="project" value="TAIR"/>
</dbReference>
<dbReference type="GO" id="GO:0005774">
    <property type="term" value="C:vacuolar membrane"/>
    <property type="evidence" value="ECO:0007669"/>
    <property type="project" value="UniProtKB-SubCell"/>
</dbReference>
<dbReference type="GO" id="GO:0015386">
    <property type="term" value="F:potassium:proton antiporter activity"/>
    <property type="evidence" value="ECO:0000314"/>
    <property type="project" value="TAIR"/>
</dbReference>
<dbReference type="GO" id="GO:0015385">
    <property type="term" value="F:sodium:proton antiporter activity"/>
    <property type="evidence" value="ECO:0000314"/>
    <property type="project" value="TAIR"/>
</dbReference>
<dbReference type="GO" id="GO:0055075">
    <property type="term" value="P:potassium ion homeostasis"/>
    <property type="evidence" value="ECO:0000316"/>
    <property type="project" value="TAIR"/>
</dbReference>
<dbReference type="GO" id="GO:1990573">
    <property type="term" value="P:potassium ion import across plasma membrane"/>
    <property type="evidence" value="ECO:0000314"/>
    <property type="project" value="TAIR"/>
</dbReference>
<dbReference type="GO" id="GO:0006885">
    <property type="term" value="P:regulation of pH"/>
    <property type="evidence" value="ECO:0007669"/>
    <property type="project" value="InterPro"/>
</dbReference>
<dbReference type="GO" id="GO:0090333">
    <property type="term" value="P:regulation of stomatal closure"/>
    <property type="evidence" value="ECO:0000316"/>
    <property type="project" value="TAIR"/>
</dbReference>
<dbReference type="Gene3D" id="6.10.140.1330">
    <property type="match status" value="1"/>
</dbReference>
<dbReference type="InterPro" id="IPR018422">
    <property type="entry name" value="Cation/H_exchanger_CPA1"/>
</dbReference>
<dbReference type="InterPro" id="IPR006153">
    <property type="entry name" value="Cation/H_exchanger_TM"/>
</dbReference>
<dbReference type="InterPro" id="IPR004709">
    <property type="entry name" value="NaH_exchanger"/>
</dbReference>
<dbReference type="NCBIfam" id="TIGR00840">
    <property type="entry name" value="b_cpa1"/>
    <property type="match status" value="1"/>
</dbReference>
<dbReference type="PANTHER" id="PTHR10110">
    <property type="entry name" value="SODIUM/HYDROGEN EXCHANGER"/>
    <property type="match status" value="1"/>
</dbReference>
<dbReference type="PANTHER" id="PTHR10110:SF117">
    <property type="entry name" value="SODIUM_HYDROGEN EXCHANGER 2"/>
    <property type="match status" value="1"/>
</dbReference>
<dbReference type="Pfam" id="PF00999">
    <property type="entry name" value="Na_H_Exchanger"/>
    <property type="match status" value="1"/>
</dbReference>
<dbReference type="PRINTS" id="PR01084">
    <property type="entry name" value="NAHEXCHNGR"/>
</dbReference>
<proteinExistence type="evidence at transcript level"/>